<keyword id="KW-0227">DNA damage</keyword>
<keyword id="KW-0234">DNA repair</keyword>
<keyword id="KW-0235">DNA replication</keyword>
<keyword id="KW-0436">Ligase</keyword>
<keyword id="KW-0460">Magnesium</keyword>
<keyword id="KW-0464">Manganese</keyword>
<keyword id="KW-0479">Metal-binding</keyword>
<keyword id="KW-0520">NAD</keyword>
<keyword id="KW-1185">Reference proteome</keyword>
<keyword id="KW-0862">Zinc</keyword>
<proteinExistence type="inferred from homology"/>
<name>DNLJ_LAWIP</name>
<organism>
    <name type="scientific">Lawsonia intracellularis (strain PHE/MN1-00)</name>
    <dbReference type="NCBI Taxonomy" id="363253"/>
    <lineage>
        <taxon>Bacteria</taxon>
        <taxon>Pseudomonadati</taxon>
        <taxon>Thermodesulfobacteriota</taxon>
        <taxon>Desulfovibrionia</taxon>
        <taxon>Desulfovibrionales</taxon>
        <taxon>Desulfovibrionaceae</taxon>
        <taxon>Lawsonia</taxon>
    </lineage>
</organism>
<gene>
    <name evidence="1" type="primary">ligA</name>
    <name type="ordered locus">LI0242</name>
</gene>
<reference key="1">
    <citation type="submission" date="2005-11" db="EMBL/GenBank/DDBJ databases">
        <title>The complete genome sequence of Lawsonia intracellularis: the causative agent of proliferative enteropathy.</title>
        <authorList>
            <person name="Kaur K."/>
            <person name="Zhang Q."/>
            <person name="Beckler D."/>
            <person name="Munir S."/>
            <person name="Li L."/>
            <person name="Kinsley K."/>
            <person name="Herron L."/>
            <person name="Peterson A."/>
            <person name="May B."/>
            <person name="Singh S."/>
            <person name="Gebhart C."/>
            <person name="Kapur V."/>
        </authorList>
    </citation>
    <scope>NUCLEOTIDE SEQUENCE [LARGE SCALE GENOMIC DNA]</scope>
    <source>
        <strain>PHE/MN1-00</strain>
    </source>
</reference>
<evidence type="ECO:0000255" key="1">
    <source>
        <dbReference type="HAMAP-Rule" id="MF_01588"/>
    </source>
</evidence>
<dbReference type="EC" id="6.5.1.2" evidence="1"/>
<dbReference type="EMBL" id="AM180252">
    <property type="protein sequence ID" value="CAJ54298.1"/>
    <property type="molecule type" value="Genomic_DNA"/>
</dbReference>
<dbReference type="RefSeq" id="WP_011526324.1">
    <property type="nucleotide sequence ID" value="NC_008011.1"/>
</dbReference>
<dbReference type="SMR" id="Q1MRS8"/>
<dbReference type="STRING" id="363253.LI0242"/>
<dbReference type="KEGG" id="lip:LI0242"/>
<dbReference type="eggNOG" id="COG0272">
    <property type="taxonomic scope" value="Bacteria"/>
</dbReference>
<dbReference type="HOGENOM" id="CLU_007764_2_1_7"/>
<dbReference type="OrthoDB" id="9759736at2"/>
<dbReference type="Proteomes" id="UP000002430">
    <property type="component" value="Chromosome"/>
</dbReference>
<dbReference type="GO" id="GO:0003911">
    <property type="term" value="F:DNA ligase (NAD+) activity"/>
    <property type="evidence" value="ECO:0007669"/>
    <property type="project" value="UniProtKB-UniRule"/>
</dbReference>
<dbReference type="GO" id="GO:0046872">
    <property type="term" value="F:metal ion binding"/>
    <property type="evidence" value="ECO:0007669"/>
    <property type="project" value="UniProtKB-KW"/>
</dbReference>
<dbReference type="GO" id="GO:0006281">
    <property type="term" value="P:DNA repair"/>
    <property type="evidence" value="ECO:0007669"/>
    <property type="project" value="UniProtKB-KW"/>
</dbReference>
<dbReference type="GO" id="GO:0006260">
    <property type="term" value="P:DNA replication"/>
    <property type="evidence" value="ECO:0007669"/>
    <property type="project" value="UniProtKB-KW"/>
</dbReference>
<dbReference type="CDD" id="cd17748">
    <property type="entry name" value="BRCT_DNA_ligase_like"/>
    <property type="match status" value="1"/>
</dbReference>
<dbReference type="CDD" id="cd00114">
    <property type="entry name" value="LIGANc"/>
    <property type="match status" value="1"/>
</dbReference>
<dbReference type="FunFam" id="1.10.150.20:FF:000006">
    <property type="entry name" value="DNA ligase"/>
    <property type="match status" value="1"/>
</dbReference>
<dbReference type="FunFam" id="1.10.287.610:FF:000002">
    <property type="entry name" value="DNA ligase"/>
    <property type="match status" value="1"/>
</dbReference>
<dbReference type="FunFam" id="2.40.50.140:FF:000012">
    <property type="entry name" value="DNA ligase"/>
    <property type="match status" value="1"/>
</dbReference>
<dbReference type="FunFam" id="3.30.470.30:FF:000001">
    <property type="entry name" value="DNA ligase"/>
    <property type="match status" value="1"/>
</dbReference>
<dbReference type="Gene3D" id="6.20.10.30">
    <property type="match status" value="1"/>
</dbReference>
<dbReference type="Gene3D" id="1.10.150.20">
    <property type="entry name" value="5' to 3' exonuclease, C-terminal subdomain"/>
    <property type="match status" value="2"/>
</dbReference>
<dbReference type="Gene3D" id="3.40.50.10190">
    <property type="entry name" value="BRCT domain"/>
    <property type="match status" value="1"/>
</dbReference>
<dbReference type="Gene3D" id="3.30.470.30">
    <property type="entry name" value="DNA ligase/mRNA capping enzyme"/>
    <property type="match status" value="1"/>
</dbReference>
<dbReference type="Gene3D" id="1.10.287.610">
    <property type="entry name" value="Helix hairpin bin"/>
    <property type="match status" value="1"/>
</dbReference>
<dbReference type="Gene3D" id="2.40.50.140">
    <property type="entry name" value="Nucleic acid-binding proteins"/>
    <property type="match status" value="1"/>
</dbReference>
<dbReference type="HAMAP" id="MF_01588">
    <property type="entry name" value="DNA_ligase_A"/>
    <property type="match status" value="1"/>
</dbReference>
<dbReference type="InterPro" id="IPR001357">
    <property type="entry name" value="BRCT_dom"/>
</dbReference>
<dbReference type="InterPro" id="IPR036420">
    <property type="entry name" value="BRCT_dom_sf"/>
</dbReference>
<dbReference type="InterPro" id="IPR041663">
    <property type="entry name" value="DisA/LigA_HHH"/>
</dbReference>
<dbReference type="InterPro" id="IPR001679">
    <property type="entry name" value="DNA_ligase"/>
</dbReference>
<dbReference type="InterPro" id="IPR033136">
    <property type="entry name" value="DNA_ligase_CS"/>
</dbReference>
<dbReference type="InterPro" id="IPR013839">
    <property type="entry name" value="DNAligase_adenylation"/>
</dbReference>
<dbReference type="InterPro" id="IPR013840">
    <property type="entry name" value="DNAligase_N"/>
</dbReference>
<dbReference type="InterPro" id="IPR012340">
    <property type="entry name" value="NA-bd_OB-fold"/>
</dbReference>
<dbReference type="InterPro" id="IPR004150">
    <property type="entry name" value="NAD_DNA_ligase_OB"/>
</dbReference>
<dbReference type="InterPro" id="IPR010994">
    <property type="entry name" value="RuvA_2-like"/>
</dbReference>
<dbReference type="InterPro" id="IPR004149">
    <property type="entry name" value="Znf_DNAligase_C4"/>
</dbReference>
<dbReference type="NCBIfam" id="TIGR00575">
    <property type="entry name" value="dnlj"/>
    <property type="match status" value="1"/>
</dbReference>
<dbReference type="NCBIfam" id="NF005932">
    <property type="entry name" value="PRK07956.1"/>
    <property type="match status" value="1"/>
</dbReference>
<dbReference type="PANTHER" id="PTHR23389">
    <property type="entry name" value="CHROMOSOME TRANSMISSION FIDELITY FACTOR 18"/>
    <property type="match status" value="1"/>
</dbReference>
<dbReference type="PANTHER" id="PTHR23389:SF9">
    <property type="entry name" value="DNA LIGASE"/>
    <property type="match status" value="1"/>
</dbReference>
<dbReference type="Pfam" id="PF00533">
    <property type="entry name" value="BRCT"/>
    <property type="match status" value="1"/>
</dbReference>
<dbReference type="Pfam" id="PF01653">
    <property type="entry name" value="DNA_ligase_aden"/>
    <property type="match status" value="1"/>
</dbReference>
<dbReference type="Pfam" id="PF03120">
    <property type="entry name" value="DNA_ligase_OB"/>
    <property type="match status" value="1"/>
</dbReference>
<dbReference type="Pfam" id="PF03119">
    <property type="entry name" value="DNA_ligase_ZBD"/>
    <property type="match status" value="1"/>
</dbReference>
<dbReference type="Pfam" id="PF12826">
    <property type="entry name" value="HHH_2"/>
    <property type="match status" value="1"/>
</dbReference>
<dbReference type="Pfam" id="PF14520">
    <property type="entry name" value="HHH_5"/>
    <property type="match status" value="1"/>
</dbReference>
<dbReference type="Pfam" id="PF22745">
    <property type="entry name" value="Nlig-Ia"/>
    <property type="match status" value="1"/>
</dbReference>
<dbReference type="PIRSF" id="PIRSF001604">
    <property type="entry name" value="LigA"/>
    <property type="match status" value="1"/>
</dbReference>
<dbReference type="SMART" id="SM00292">
    <property type="entry name" value="BRCT"/>
    <property type="match status" value="1"/>
</dbReference>
<dbReference type="SMART" id="SM00532">
    <property type="entry name" value="LIGANc"/>
    <property type="match status" value="1"/>
</dbReference>
<dbReference type="SUPFAM" id="SSF52113">
    <property type="entry name" value="BRCT domain"/>
    <property type="match status" value="1"/>
</dbReference>
<dbReference type="SUPFAM" id="SSF56091">
    <property type="entry name" value="DNA ligase/mRNA capping enzyme, catalytic domain"/>
    <property type="match status" value="1"/>
</dbReference>
<dbReference type="SUPFAM" id="SSF50249">
    <property type="entry name" value="Nucleic acid-binding proteins"/>
    <property type="match status" value="1"/>
</dbReference>
<dbReference type="SUPFAM" id="SSF47781">
    <property type="entry name" value="RuvA domain 2-like"/>
    <property type="match status" value="1"/>
</dbReference>
<dbReference type="PROSITE" id="PS50172">
    <property type="entry name" value="BRCT"/>
    <property type="match status" value="1"/>
</dbReference>
<dbReference type="PROSITE" id="PS01056">
    <property type="entry name" value="DNA_LIGASE_N2"/>
    <property type="match status" value="1"/>
</dbReference>
<feature type="chain" id="PRO_0000313284" description="DNA ligase">
    <location>
        <begin position="1"/>
        <end position="682"/>
    </location>
</feature>
<feature type="domain" description="BRCT" evidence="1">
    <location>
        <begin position="603"/>
        <end position="682"/>
    </location>
</feature>
<feature type="active site" description="N6-AMP-lysine intermediate" evidence="1">
    <location>
        <position position="125"/>
    </location>
</feature>
<feature type="binding site" evidence="1">
    <location>
        <begin position="43"/>
        <end position="47"/>
    </location>
    <ligand>
        <name>NAD(+)</name>
        <dbReference type="ChEBI" id="CHEBI:57540"/>
    </ligand>
</feature>
<feature type="binding site" evidence="1">
    <location>
        <begin position="92"/>
        <end position="93"/>
    </location>
    <ligand>
        <name>NAD(+)</name>
        <dbReference type="ChEBI" id="CHEBI:57540"/>
    </ligand>
</feature>
<feature type="binding site" evidence="1">
    <location>
        <position position="123"/>
    </location>
    <ligand>
        <name>NAD(+)</name>
        <dbReference type="ChEBI" id="CHEBI:57540"/>
    </ligand>
</feature>
<feature type="binding site" evidence="1">
    <location>
        <position position="146"/>
    </location>
    <ligand>
        <name>NAD(+)</name>
        <dbReference type="ChEBI" id="CHEBI:57540"/>
    </ligand>
</feature>
<feature type="binding site" evidence="1">
    <location>
        <position position="184"/>
    </location>
    <ligand>
        <name>NAD(+)</name>
        <dbReference type="ChEBI" id="CHEBI:57540"/>
    </ligand>
</feature>
<feature type="binding site" evidence="1">
    <location>
        <position position="302"/>
    </location>
    <ligand>
        <name>NAD(+)</name>
        <dbReference type="ChEBI" id="CHEBI:57540"/>
    </ligand>
</feature>
<feature type="binding site" evidence="1">
    <location>
        <position position="326"/>
    </location>
    <ligand>
        <name>NAD(+)</name>
        <dbReference type="ChEBI" id="CHEBI:57540"/>
    </ligand>
</feature>
<feature type="binding site" evidence="1">
    <location>
        <position position="420"/>
    </location>
    <ligand>
        <name>Zn(2+)</name>
        <dbReference type="ChEBI" id="CHEBI:29105"/>
    </ligand>
</feature>
<feature type="binding site" evidence="1">
    <location>
        <position position="423"/>
    </location>
    <ligand>
        <name>Zn(2+)</name>
        <dbReference type="ChEBI" id="CHEBI:29105"/>
    </ligand>
</feature>
<feature type="binding site" evidence="1">
    <location>
        <position position="438"/>
    </location>
    <ligand>
        <name>Zn(2+)</name>
        <dbReference type="ChEBI" id="CHEBI:29105"/>
    </ligand>
</feature>
<feature type="binding site" evidence="1">
    <location>
        <position position="443"/>
    </location>
    <ligand>
        <name>Zn(2+)</name>
        <dbReference type="ChEBI" id="CHEBI:29105"/>
    </ligand>
</feature>
<accession>Q1MRS8</accession>
<protein>
    <recommendedName>
        <fullName evidence="1">DNA ligase</fullName>
        <ecNumber evidence="1">6.5.1.2</ecNumber>
    </recommendedName>
    <alternativeName>
        <fullName evidence="1">Polydeoxyribonucleotide synthase [NAD(+)]</fullName>
    </alternativeName>
</protein>
<sequence length="682" mass="76925">MSINSPQYSLPSKKEKQRVRELRKFINHHNYLYYTLDDPEISDSEYDKAFQELLTLENTFPSLKTNNSPTQKVGNNILKKLEEQPHRQRMYSLDNVFSNDEWEGFLKRLANALPEVPFSFWCDPKMDGLALELIYEKGQLTSALTRGDGDIGEVVTEAVRTISNIPKRLKHSINAPELLEIRGEVVISRADFKKLNKEQEKKKKKLFANPRNAASGSVRQLDPTITASRPLRFLAYGIGEIQPSSLKWNTYHELMSYLKEYGFETPPKGKLCISSTEVQSYYTRLQAQRYSLRYEIDGIVMKLDDIQSQEKLGYTSRAPRFAIAWKFPATQVQTRLLQIHIQVGRTGVLTPVAELEPINVGGATISRATLHNEDEIKNKDIRPGDMVIVQRAGDVIPEIVSPILSDRSAKSKPFVFPKICPVCHEKVYRINNEVAWRCINLSCPAIRLQSIIYFVSKSGLNIQGIGQRLIELLVTSGCIKTPADLFTLTTADLLTYKRMGAKLAAKTIQALSLAKQTMSLHRLICALGIRHVGEQTARILASSFIDLDALSSASLEDLQQLSEIGPEVASSIQAFFKNKANIQMINQFREMNIWPIQQVNDTTTKGFFTGKKLLFTGTLERPRAEMKRLAEEAGAIVMTGISHKLDYVIAGKNPGSKLNKAQELHISILDEPTFLQKLLIVL</sequence>
<comment type="function">
    <text evidence="1">DNA ligase that catalyzes the formation of phosphodiester linkages between 5'-phosphoryl and 3'-hydroxyl groups in double-stranded DNA using NAD as a coenzyme and as the energy source for the reaction. It is essential for DNA replication and repair of damaged DNA.</text>
</comment>
<comment type="catalytic activity">
    <reaction evidence="1">
        <text>NAD(+) + (deoxyribonucleotide)n-3'-hydroxyl + 5'-phospho-(deoxyribonucleotide)m = (deoxyribonucleotide)n+m + AMP + beta-nicotinamide D-nucleotide.</text>
        <dbReference type="EC" id="6.5.1.2"/>
    </reaction>
</comment>
<comment type="cofactor">
    <cofactor evidence="1">
        <name>Mg(2+)</name>
        <dbReference type="ChEBI" id="CHEBI:18420"/>
    </cofactor>
    <cofactor evidence="1">
        <name>Mn(2+)</name>
        <dbReference type="ChEBI" id="CHEBI:29035"/>
    </cofactor>
</comment>
<comment type="similarity">
    <text evidence="1">Belongs to the NAD-dependent DNA ligase family. LigA subfamily.</text>
</comment>